<dbReference type="EC" id="7.1.1.2"/>
<dbReference type="EMBL" id="X83390">
    <property type="protein sequence ID" value="CAA58297.1"/>
    <property type="molecule type" value="Genomic_DNA"/>
</dbReference>
<dbReference type="PIR" id="S59144">
    <property type="entry name" value="S59144"/>
</dbReference>
<dbReference type="RefSeq" id="NP_007330.1">
    <property type="nucleotide sequence ID" value="NC_001761.1"/>
</dbReference>
<dbReference type="SMR" id="P48897"/>
<dbReference type="GeneID" id="808009"/>
<dbReference type="CTD" id="4535"/>
<dbReference type="GO" id="GO:0005743">
    <property type="term" value="C:mitochondrial inner membrane"/>
    <property type="evidence" value="ECO:0007669"/>
    <property type="project" value="UniProtKB-SubCell"/>
</dbReference>
<dbReference type="GO" id="GO:0008137">
    <property type="term" value="F:NADH dehydrogenase (ubiquinone) activity"/>
    <property type="evidence" value="ECO:0007669"/>
    <property type="project" value="UniProtKB-EC"/>
</dbReference>
<dbReference type="GO" id="GO:0009060">
    <property type="term" value="P:aerobic respiration"/>
    <property type="evidence" value="ECO:0007669"/>
    <property type="project" value="TreeGrafter"/>
</dbReference>
<dbReference type="HAMAP" id="MF_01350">
    <property type="entry name" value="NDH1_NuoH"/>
    <property type="match status" value="1"/>
</dbReference>
<dbReference type="InterPro" id="IPR001694">
    <property type="entry name" value="NADH_UbQ_OxRdtase_su1/FPO"/>
</dbReference>
<dbReference type="InterPro" id="IPR018086">
    <property type="entry name" value="NADH_UbQ_OxRdtase_su1_CS"/>
</dbReference>
<dbReference type="PANTHER" id="PTHR11432">
    <property type="entry name" value="NADH DEHYDROGENASE SUBUNIT 1"/>
    <property type="match status" value="1"/>
</dbReference>
<dbReference type="PANTHER" id="PTHR11432:SF3">
    <property type="entry name" value="NADH-UBIQUINONE OXIDOREDUCTASE CHAIN 1"/>
    <property type="match status" value="1"/>
</dbReference>
<dbReference type="Pfam" id="PF00146">
    <property type="entry name" value="NADHdh"/>
    <property type="match status" value="1"/>
</dbReference>
<dbReference type="PROSITE" id="PS00667">
    <property type="entry name" value="COMPLEX1_ND1_1"/>
    <property type="match status" value="1"/>
</dbReference>
<dbReference type="PROSITE" id="PS00668">
    <property type="entry name" value="COMPLEX1_ND1_2"/>
    <property type="match status" value="1"/>
</dbReference>
<keyword id="KW-0249">Electron transport</keyword>
<keyword id="KW-0472">Membrane</keyword>
<keyword id="KW-0496">Mitochondrion</keyword>
<keyword id="KW-0999">Mitochondrion inner membrane</keyword>
<keyword id="KW-0520">NAD</keyword>
<keyword id="KW-0679">Respiratory chain</keyword>
<keyword id="KW-1278">Translocase</keyword>
<keyword id="KW-0812">Transmembrane</keyword>
<keyword id="KW-1133">Transmembrane helix</keyword>
<keyword id="KW-0813">Transport</keyword>
<keyword id="KW-0830">Ubiquinone</keyword>
<organism>
    <name type="scientific">Albinaria caerulea</name>
    <name type="common">Land snail</name>
    <dbReference type="NCBI Taxonomy" id="42349"/>
    <lineage>
        <taxon>Eukaryota</taxon>
        <taxon>Metazoa</taxon>
        <taxon>Spiralia</taxon>
        <taxon>Lophotrochozoa</taxon>
        <taxon>Mollusca</taxon>
        <taxon>Gastropoda</taxon>
        <taxon>Heterobranchia</taxon>
        <taxon>Euthyneura</taxon>
        <taxon>Panpulmonata</taxon>
        <taxon>Eupulmonata</taxon>
        <taxon>Stylommatophora</taxon>
        <taxon>Helicina</taxon>
        <taxon>Clausilioidea</taxon>
        <taxon>Clausiliidae</taxon>
        <taxon>Alopiinae</taxon>
        <taxon>Albinaria</taxon>
    </lineage>
</organism>
<gene>
    <name type="primary">ND1</name>
</gene>
<name>NU1M_ALBCA</name>
<sequence>MVVFKSLLLNLCILLSVAFYTLLERKVLSSMQIRKGPNKVGLYGIIQPIADALKLFLKEFFIPVNSNSFMFMILPLLGLTLSLMLWAVFPSMWMFNFHSYLLMLFVALTGTFVYVIIFAGWSSNSKYSFLGGMRAAAQTISYEVSMLLLLFFAVLMYRTYSWYEAGLSSPIGIIIFIIMFIWFASCLAETNRAPFDFAEGESELVSGFNIEYYGGMFALLFLAEYSSILFMCMMSTVWFLYSDMIFIMTLLILLIAMAFLFARGVYPRHRYDLLMNLCWKSFLPFSLCCICYSMLLWIV</sequence>
<accession>P48897</accession>
<reference key="1">
    <citation type="journal article" date="1995" name="Genetics">
        <title>Complete sequence and gene organization of the mitochondrial genome of the land snail Albinaria coerulea.</title>
        <authorList>
            <person name="Hatzoglou E."/>
            <person name="Rodakis G.C."/>
            <person name="Lecanidou R."/>
        </authorList>
    </citation>
    <scope>NUCLEOTIDE SEQUENCE [GENOMIC DNA]</scope>
</reference>
<evidence type="ECO:0000250" key="1"/>
<evidence type="ECO:0000255" key="2"/>
<evidence type="ECO:0000305" key="3"/>
<proteinExistence type="inferred from homology"/>
<comment type="function">
    <text evidence="1">Core subunit of the mitochondrial membrane respiratory chain NADH dehydrogenase (Complex I) that is believed to belong to the minimal assembly required for catalysis. Complex I functions in the transfer of electrons from NADH to the respiratory chain. The immediate electron acceptor for the enzyme is believed to be ubiquinone (By similarity).</text>
</comment>
<comment type="catalytic activity">
    <reaction>
        <text>a ubiquinone + NADH + 5 H(+)(in) = a ubiquinol + NAD(+) + 4 H(+)(out)</text>
        <dbReference type="Rhea" id="RHEA:29091"/>
        <dbReference type="Rhea" id="RHEA-COMP:9565"/>
        <dbReference type="Rhea" id="RHEA-COMP:9566"/>
        <dbReference type="ChEBI" id="CHEBI:15378"/>
        <dbReference type="ChEBI" id="CHEBI:16389"/>
        <dbReference type="ChEBI" id="CHEBI:17976"/>
        <dbReference type="ChEBI" id="CHEBI:57540"/>
        <dbReference type="ChEBI" id="CHEBI:57945"/>
        <dbReference type="EC" id="7.1.1.2"/>
    </reaction>
</comment>
<comment type="subcellular location">
    <subcellularLocation>
        <location evidence="1">Mitochondrion inner membrane</location>
        <topology evidence="1">Multi-pass membrane protein</topology>
    </subcellularLocation>
</comment>
<comment type="similarity">
    <text evidence="3">Belongs to the complex I subunit 1 family.</text>
</comment>
<geneLocation type="mitochondrion"/>
<protein>
    <recommendedName>
        <fullName>NADH-ubiquinone oxidoreductase chain 1</fullName>
        <ecNumber>7.1.1.2</ecNumber>
    </recommendedName>
    <alternativeName>
        <fullName>NADH dehydrogenase subunit 1</fullName>
    </alternativeName>
</protein>
<feature type="chain" id="PRO_0000117338" description="NADH-ubiquinone oxidoreductase chain 1">
    <location>
        <begin position="1"/>
        <end position="299"/>
    </location>
</feature>
<feature type="transmembrane region" description="Helical" evidence="2">
    <location>
        <begin position="2"/>
        <end position="22"/>
    </location>
</feature>
<feature type="transmembrane region" description="Helical" evidence="2">
    <location>
        <begin position="69"/>
        <end position="89"/>
    </location>
</feature>
<feature type="transmembrane region" description="Helical" evidence="2">
    <location>
        <begin position="101"/>
        <end position="121"/>
    </location>
</feature>
<feature type="transmembrane region" description="Helical" evidence="2">
    <location>
        <begin position="136"/>
        <end position="156"/>
    </location>
</feature>
<feature type="transmembrane region" description="Helical" evidence="2">
    <location>
        <begin position="167"/>
        <end position="187"/>
    </location>
</feature>
<feature type="transmembrane region" description="Helical" evidence="2">
    <location>
        <begin position="214"/>
        <end position="234"/>
    </location>
</feature>
<feature type="transmembrane region" description="Helical" evidence="2">
    <location>
        <begin position="242"/>
        <end position="262"/>
    </location>
</feature>
<feature type="transmembrane region" description="Helical" evidence="2">
    <location>
        <begin position="279"/>
        <end position="299"/>
    </location>
</feature>